<feature type="signal peptide">
    <location>
        <begin position="1"/>
        <end position="20"/>
    </location>
</feature>
<feature type="chain" id="PRO_0000032270" description="Alpha/beta-gliadin A-III">
    <location>
        <begin position="21"/>
        <end position="282"/>
    </location>
</feature>
<feature type="region of interest" description="Disordered" evidence="2">
    <location>
        <begin position="27"/>
        <end position="122"/>
    </location>
</feature>
<feature type="region of interest" description="Disordered" evidence="2">
    <location>
        <begin position="220"/>
        <end position="240"/>
    </location>
</feature>
<feature type="compositionally biased region" description="Low complexity" evidence="2">
    <location>
        <begin position="27"/>
        <end position="59"/>
    </location>
</feature>
<feature type="compositionally biased region" description="Pro residues" evidence="2">
    <location>
        <begin position="60"/>
        <end position="111"/>
    </location>
</feature>
<feature type="compositionally biased region" description="Low complexity" evidence="2">
    <location>
        <begin position="112"/>
        <end position="122"/>
    </location>
</feature>
<feature type="compositionally biased region" description="Polar residues" evidence="2">
    <location>
        <begin position="224"/>
        <end position="240"/>
    </location>
</feature>
<comment type="function">
    <text>Gliadin is the major seed storage protein in wheat.</text>
</comment>
<comment type="PTM">
    <text evidence="1">Substrate of transglutaminase.</text>
</comment>
<comment type="allergen">
    <text evidence="1">Causes an allergic reaction in human. Is the cause of the celiac disease, also known as celiac sprue or gluten-sensitive enteropathy (By similarity).</text>
</comment>
<comment type="miscellaneous">
    <text>The alpha/beta-gliadins can be divided into 5 homology classes. Sequence divergence between the classes is due to single base substitutions and to duplications or deletions within or near direct repeats. There are more than a 100 copies of the gene for alpha/beta-gliadin per haploid genome.</text>
</comment>
<comment type="similarity">
    <text evidence="3">Belongs to the gliadin/glutenin family.</text>
</comment>
<organism>
    <name type="scientific">Triticum aestivum</name>
    <name type="common">Wheat</name>
    <dbReference type="NCBI Taxonomy" id="4565"/>
    <lineage>
        <taxon>Eukaryota</taxon>
        <taxon>Viridiplantae</taxon>
        <taxon>Streptophyta</taxon>
        <taxon>Embryophyta</taxon>
        <taxon>Tracheophyta</taxon>
        <taxon>Spermatophyta</taxon>
        <taxon>Magnoliopsida</taxon>
        <taxon>Liliopsida</taxon>
        <taxon>Poales</taxon>
        <taxon>Poaceae</taxon>
        <taxon>BOP clade</taxon>
        <taxon>Pooideae</taxon>
        <taxon>Triticodae</taxon>
        <taxon>Triticeae</taxon>
        <taxon>Triticinae</taxon>
        <taxon>Triticum</taxon>
    </lineage>
</organism>
<reference key="1">
    <citation type="journal article" date="1985" name="J. Biol. Chem.">
        <title>Evolution and heterogeneity of the alpha-/beta-type and gamma-type gliadin DNA sequences.</title>
        <authorList>
            <person name="Okita T.W."/>
            <person name="Cheesbrough V."/>
            <person name="Reeves C.D."/>
        </authorList>
    </citation>
    <scope>NUCLEOTIDE SEQUENCE [MRNA]</scope>
</reference>
<evidence type="ECO:0000250" key="1"/>
<evidence type="ECO:0000256" key="2">
    <source>
        <dbReference type="SAM" id="MobiDB-lite"/>
    </source>
</evidence>
<evidence type="ECO:0000305" key="3"/>
<protein>
    <recommendedName>
        <fullName>Alpha/beta-gliadin A-III</fullName>
    </recommendedName>
    <alternativeName>
        <fullName>Prolamin</fullName>
    </alternativeName>
</protein>
<name>GDA3_WHEAT</name>
<sequence length="282" mass="32236">MKTFLILALLAIVATTATSAVRVPVPQLQPQNPSQQQPQEQVPLMQQQQQFPGQQEQFPPQQPYPHQQPFPSQQPYPQPQPFPPQLPYPQTQPFPPQQPYPQPQPQYPQPQQPISQQQAQQQQQQQQTLQQILQQQLIPCRDVVLQQHNIAHASSQVLQQSSYQQLQQLCCQQLFQIPEQSRCQAIHNVVHAIILHHHQQQQQQPSSQVSYQQPQEQYPSGQVSFQSSQQNPQAQGSVQPQQLPQFQEIRNLALQTLPAMCNVYIPPYCSTTIAPFGIFGTN</sequence>
<proteinExistence type="evidence at transcript level"/>
<accession>P04723</accession>
<keyword id="KW-0020">Allergen</keyword>
<keyword id="KW-1185">Reference proteome</keyword>
<keyword id="KW-0677">Repeat</keyword>
<keyword id="KW-0708">Seed storage protein</keyword>
<keyword id="KW-0732">Signal</keyword>
<keyword id="KW-0758">Storage protein</keyword>
<dbReference type="EMBL" id="M11076">
    <property type="protein sequence ID" value="AAA34283.1"/>
    <property type="molecule type" value="mRNA"/>
</dbReference>
<dbReference type="PIR" id="E22364">
    <property type="entry name" value="E22364"/>
</dbReference>
<dbReference type="PIR" id="T06504">
    <property type="entry name" value="T06504"/>
</dbReference>
<dbReference type="STRING" id="4565.P04723"/>
<dbReference type="Proteomes" id="UP000019116">
    <property type="component" value="Unplaced"/>
</dbReference>
<dbReference type="ExpressionAtlas" id="P04723">
    <property type="expression patterns" value="baseline and differential"/>
</dbReference>
<dbReference type="GO" id="GO:0045735">
    <property type="term" value="F:nutrient reservoir activity"/>
    <property type="evidence" value="ECO:0007669"/>
    <property type="project" value="UniProtKB-KW"/>
</dbReference>
<dbReference type="Gene3D" id="1.10.110.10">
    <property type="entry name" value="Plant lipid-transfer and hydrophobic proteins"/>
    <property type="match status" value="2"/>
</dbReference>
<dbReference type="InterPro" id="IPR036312">
    <property type="entry name" value="Bifun_inhib/LTP/seed_sf"/>
</dbReference>
<dbReference type="InterPro" id="IPR016140">
    <property type="entry name" value="Bifunc_inhib/LTP/seed_store"/>
</dbReference>
<dbReference type="InterPro" id="IPR001954">
    <property type="entry name" value="Glia_glutenin"/>
</dbReference>
<dbReference type="PANTHER" id="PTHR33454:SF7">
    <property type="entry name" value="ALPHA_BETA-GLIADIN MM1"/>
    <property type="match status" value="1"/>
</dbReference>
<dbReference type="PANTHER" id="PTHR33454">
    <property type="entry name" value="PROLAMIN PPROL 14P"/>
    <property type="match status" value="1"/>
</dbReference>
<dbReference type="Pfam" id="PF13016">
    <property type="entry name" value="Gliadin"/>
    <property type="match status" value="1"/>
</dbReference>
<dbReference type="PRINTS" id="PR00208">
    <property type="entry name" value="GLIADGLUTEN"/>
</dbReference>
<dbReference type="PRINTS" id="PR00209">
    <property type="entry name" value="GLIADIN"/>
</dbReference>
<dbReference type="SMART" id="SM00499">
    <property type="entry name" value="AAI"/>
    <property type="match status" value="1"/>
</dbReference>
<dbReference type="SUPFAM" id="SSF47699">
    <property type="entry name" value="Bifunctional inhibitor/lipid-transfer protein/seed storage 2S albumin"/>
    <property type="match status" value="1"/>
</dbReference>